<comment type="function">
    <text evidence="1">With S4 and S12 plays an important role in translational accuracy.</text>
</comment>
<comment type="function">
    <text evidence="1">Located at the back of the 30S subunit body where it stabilizes the conformation of the head with respect to the body.</text>
</comment>
<comment type="subunit">
    <text evidence="1">Part of the 30S ribosomal subunit. Contacts proteins S4 and S8.</text>
</comment>
<comment type="domain">
    <text>The N-terminal domain interacts with the head of the 30S subunit; the C-terminal domain interacts with the body and contacts protein S4. The interaction surface between S4 and S5 is involved in control of translational fidelity.</text>
</comment>
<comment type="similarity">
    <text evidence="1">Belongs to the universal ribosomal protein uS5 family.</text>
</comment>
<keyword id="KW-0687">Ribonucleoprotein</keyword>
<keyword id="KW-0689">Ribosomal protein</keyword>
<keyword id="KW-0694">RNA-binding</keyword>
<keyword id="KW-0699">rRNA-binding</keyword>
<evidence type="ECO:0000255" key="1">
    <source>
        <dbReference type="HAMAP-Rule" id="MF_01307"/>
    </source>
</evidence>
<evidence type="ECO:0000305" key="2"/>
<accession>Q3APJ0</accession>
<organism>
    <name type="scientific">Chlorobium chlorochromatii (strain CaD3)</name>
    <dbReference type="NCBI Taxonomy" id="340177"/>
    <lineage>
        <taxon>Bacteria</taxon>
        <taxon>Pseudomonadati</taxon>
        <taxon>Chlorobiota</taxon>
        <taxon>Chlorobiia</taxon>
        <taxon>Chlorobiales</taxon>
        <taxon>Chlorobiaceae</taxon>
        <taxon>Chlorobium/Pelodictyon group</taxon>
        <taxon>Chlorobium</taxon>
    </lineage>
</organism>
<name>RS5_CHLCH</name>
<reference key="1">
    <citation type="submission" date="2005-08" db="EMBL/GenBank/DDBJ databases">
        <title>Complete sequence of Chlorobium chlorochromatii CaD3.</title>
        <authorList>
            <consortium name="US DOE Joint Genome Institute"/>
            <person name="Copeland A."/>
            <person name="Lucas S."/>
            <person name="Lapidus A."/>
            <person name="Barry K."/>
            <person name="Detter J.C."/>
            <person name="Glavina T."/>
            <person name="Hammon N."/>
            <person name="Israni S."/>
            <person name="Pitluck S."/>
            <person name="Bryant D."/>
            <person name="Schmutz J."/>
            <person name="Larimer F."/>
            <person name="Land M."/>
            <person name="Kyrpides N."/>
            <person name="Ivanova N."/>
            <person name="Richardson P."/>
        </authorList>
    </citation>
    <scope>NUCLEOTIDE SEQUENCE [LARGE SCALE GENOMIC DNA]</scope>
    <source>
        <strain>CaD3</strain>
    </source>
</reference>
<protein>
    <recommendedName>
        <fullName evidence="1">Small ribosomal subunit protein uS5</fullName>
    </recommendedName>
    <alternativeName>
        <fullName evidence="2">30S ribosomal protein S5</fullName>
    </alternativeName>
</protein>
<proteinExistence type="inferred from homology"/>
<feature type="chain" id="PRO_0000230339" description="Small ribosomal subunit protein uS5">
    <location>
        <begin position="1"/>
        <end position="172"/>
    </location>
</feature>
<feature type="domain" description="S5 DRBM" evidence="1">
    <location>
        <begin position="16"/>
        <end position="79"/>
    </location>
</feature>
<gene>
    <name evidence="1" type="primary">rpsE</name>
    <name type="ordered locus">Cag_1834</name>
</gene>
<dbReference type="EMBL" id="CP000108">
    <property type="protein sequence ID" value="ABB29085.1"/>
    <property type="molecule type" value="Genomic_DNA"/>
</dbReference>
<dbReference type="SMR" id="Q3APJ0"/>
<dbReference type="STRING" id="340177.Cag_1834"/>
<dbReference type="KEGG" id="cch:Cag_1834"/>
<dbReference type="eggNOG" id="COG0098">
    <property type="taxonomic scope" value="Bacteria"/>
</dbReference>
<dbReference type="HOGENOM" id="CLU_065898_2_2_10"/>
<dbReference type="OrthoDB" id="9809045at2"/>
<dbReference type="GO" id="GO:0015935">
    <property type="term" value="C:small ribosomal subunit"/>
    <property type="evidence" value="ECO:0007669"/>
    <property type="project" value="InterPro"/>
</dbReference>
<dbReference type="GO" id="GO:0019843">
    <property type="term" value="F:rRNA binding"/>
    <property type="evidence" value="ECO:0007669"/>
    <property type="project" value="UniProtKB-UniRule"/>
</dbReference>
<dbReference type="GO" id="GO:0003735">
    <property type="term" value="F:structural constituent of ribosome"/>
    <property type="evidence" value="ECO:0007669"/>
    <property type="project" value="InterPro"/>
</dbReference>
<dbReference type="GO" id="GO:0006412">
    <property type="term" value="P:translation"/>
    <property type="evidence" value="ECO:0007669"/>
    <property type="project" value="UniProtKB-UniRule"/>
</dbReference>
<dbReference type="FunFam" id="3.30.160.20:FF:000001">
    <property type="entry name" value="30S ribosomal protein S5"/>
    <property type="match status" value="1"/>
</dbReference>
<dbReference type="FunFam" id="3.30.230.10:FF:000002">
    <property type="entry name" value="30S ribosomal protein S5"/>
    <property type="match status" value="1"/>
</dbReference>
<dbReference type="Gene3D" id="3.30.160.20">
    <property type="match status" value="1"/>
</dbReference>
<dbReference type="Gene3D" id="3.30.230.10">
    <property type="match status" value="1"/>
</dbReference>
<dbReference type="HAMAP" id="MF_01307_B">
    <property type="entry name" value="Ribosomal_uS5_B"/>
    <property type="match status" value="1"/>
</dbReference>
<dbReference type="InterPro" id="IPR020568">
    <property type="entry name" value="Ribosomal_Su5_D2-typ_SF"/>
</dbReference>
<dbReference type="InterPro" id="IPR000851">
    <property type="entry name" value="Ribosomal_uS5"/>
</dbReference>
<dbReference type="InterPro" id="IPR005712">
    <property type="entry name" value="Ribosomal_uS5_bac-type"/>
</dbReference>
<dbReference type="InterPro" id="IPR005324">
    <property type="entry name" value="Ribosomal_uS5_C"/>
</dbReference>
<dbReference type="InterPro" id="IPR013810">
    <property type="entry name" value="Ribosomal_uS5_N"/>
</dbReference>
<dbReference type="InterPro" id="IPR018192">
    <property type="entry name" value="Ribosomal_uS5_N_CS"/>
</dbReference>
<dbReference type="InterPro" id="IPR014721">
    <property type="entry name" value="Ribsml_uS5_D2-typ_fold_subgr"/>
</dbReference>
<dbReference type="NCBIfam" id="TIGR01021">
    <property type="entry name" value="rpsE_bact"/>
    <property type="match status" value="1"/>
</dbReference>
<dbReference type="PANTHER" id="PTHR48277">
    <property type="entry name" value="MITOCHONDRIAL RIBOSOMAL PROTEIN S5"/>
    <property type="match status" value="1"/>
</dbReference>
<dbReference type="PANTHER" id="PTHR48277:SF1">
    <property type="entry name" value="MITOCHONDRIAL RIBOSOMAL PROTEIN S5"/>
    <property type="match status" value="1"/>
</dbReference>
<dbReference type="Pfam" id="PF00333">
    <property type="entry name" value="Ribosomal_S5"/>
    <property type="match status" value="1"/>
</dbReference>
<dbReference type="Pfam" id="PF03719">
    <property type="entry name" value="Ribosomal_S5_C"/>
    <property type="match status" value="1"/>
</dbReference>
<dbReference type="SUPFAM" id="SSF54768">
    <property type="entry name" value="dsRNA-binding domain-like"/>
    <property type="match status" value="1"/>
</dbReference>
<dbReference type="SUPFAM" id="SSF54211">
    <property type="entry name" value="Ribosomal protein S5 domain 2-like"/>
    <property type="match status" value="1"/>
</dbReference>
<dbReference type="PROSITE" id="PS00585">
    <property type="entry name" value="RIBOSOMAL_S5"/>
    <property type="match status" value="1"/>
</dbReference>
<dbReference type="PROSITE" id="PS50881">
    <property type="entry name" value="S5_DSRBD"/>
    <property type="match status" value="1"/>
</dbReference>
<sequence>MAKTSAKSIRPGELNLKEKLVHINRTAKVVKGGKRFGFNAIVVVGDKEGHVGYGLGKANEVQDAIAKGIEDGKKNVIKVPIVKGTIPHQIVVKYGSAKVMMKPATPGTGLIAGGAVRAVLEMAGIHDILTKSLGSSNPHNVVKAAIKGLQYISDAYDVGERRSKSLSDVFES</sequence>